<accession>Q3MHX5</accession>
<evidence type="ECO:0000250" key="1">
    <source>
        <dbReference type="UniProtKB" id="Q96I99"/>
    </source>
</evidence>
<evidence type="ECO:0000250" key="2">
    <source>
        <dbReference type="UniProtKB" id="Q9Z2I8"/>
    </source>
</evidence>
<evidence type="ECO:0000255" key="3">
    <source>
        <dbReference type="HAMAP-Rule" id="MF_03221"/>
    </source>
</evidence>
<keyword id="KW-0007">Acetylation</keyword>
<keyword id="KW-0342">GTP-binding</keyword>
<keyword id="KW-0436">Ligase</keyword>
<keyword id="KW-0460">Magnesium</keyword>
<keyword id="KW-0479">Metal-binding</keyword>
<keyword id="KW-0496">Mitochondrion</keyword>
<keyword id="KW-0547">Nucleotide-binding</keyword>
<keyword id="KW-0597">Phosphoprotein</keyword>
<keyword id="KW-1185">Reference proteome</keyword>
<keyword id="KW-0809">Transit peptide</keyword>
<keyword id="KW-0816">Tricarboxylic acid cycle</keyword>
<sequence>MAAPVGAQARKLLRDLVLRPPLLAARSQVVQLTSRRWLNLQEYQSKKLMSDNGVKVQRFFVADTANEALEAAKRLNAKEIVLKAQILAGGRGKGVFSSGLKGGVHLTKDPKVVGQLAKQMIGYNLATKQTPKEGVKVKKVMVAEALDISRETYLAILMDRSCNGPVLVGSPQGGVDIEEVAASNPELIFKEQIDIIEGIKDSQAQRMAENLGFLGPLKNQAADQIKKLYNLFLKIDATQVEVNPFGETPEGQVVCFDAKINFDDNAEFRQKDIFAMDDKSENEPIENEAARYDLKYIGLDGNIACFVNGAGLAMATCDIIFLNGGKPANFLDLGGGVKESQVYQAFKLLTADPKVEAILVNIFGGIVNCAIIANGITKACRELELKVPLVVRLEGTNVHEAQNILSNSGLPITSAVDLEDAAKKAVASVAKK</sequence>
<feature type="transit peptide" description="Mitochondrion" evidence="1">
    <location>
        <begin position="1"/>
        <end position="37"/>
    </location>
</feature>
<feature type="chain" id="PRO_0000230989" description="Succinate--CoA ligase [GDP-forming] subunit beta, mitochondrial">
    <location>
        <begin position="38"/>
        <end position="432"/>
    </location>
</feature>
<feature type="domain" description="ATP-grasp" evidence="3">
    <location>
        <begin position="46"/>
        <end position="274"/>
    </location>
</feature>
<feature type="binding site" evidence="3">
    <location>
        <position position="57"/>
    </location>
    <ligand>
        <name>GTP</name>
        <dbReference type="ChEBI" id="CHEBI:37565"/>
    </ligand>
</feature>
<feature type="binding site" evidence="3">
    <location>
        <begin position="90"/>
        <end position="92"/>
    </location>
    <ligand>
        <name>GTP</name>
        <dbReference type="ChEBI" id="CHEBI:37565"/>
    </ligand>
</feature>
<feature type="binding site" evidence="3">
    <location>
        <position position="146"/>
    </location>
    <ligand>
        <name>GTP</name>
        <dbReference type="ChEBI" id="CHEBI:37565"/>
    </ligand>
</feature>
<feature type="binding site" evidence="3">
    <location>
        <position position="243"/>
    </location>
    <ligand>
        <name>Mg(2+)</name>
        <dbReference type="ChEBI" id="CHEBI:18420"/>
    </ligand>
</feature>
<feature type="binding site" evidence="3">
    <location>
        <position position="257"/>
    </location>
    <ligand>
        <name>Mg(2+)</name>
        <dbReference type="ChEBI" id="CHEBI:18420"/>
    </ligand>
</feature>
<feature type="binding site" evidence="3">
    <location>
        <position position="308"/>
    </location>
    <ligand>
        <name>substrate</name>
        <note>ligand shared with subunit alpha</note>
    </ligand>
</feature>
<feature type="binding site" evidence="3">
    <location>
        <begin position="365"/>
        <end position="367"/>
    </location>
    <ligand>
        <name>substrate</name>
        <note>ligand shared with subunit alpha</note>
    </ligand>
</feature>
<feature type="site" description="Important for substrate specificity" evidence="3">
    <location>
        <position position="79"/>
    </location>
</feature>
<feature type="site" description="Important for substrate specificity" evidence="3">
    <location>
        <position position="147"/>
    </location>
</feature>
<feature type="modified residue" description="N6-acetyllysine" evidence="2">
    <location>
        <position position="73"/>
    </location>
</feature>
<feature type="modified residue" description="N6-succinyllysine" evidence="2">
    <location>
        <position position="78"/>
    </location>
</feature>
<feature type="modified residue" description="N6-acetyllysine" evidence="2">
    <location>
        <position position="111"/>
    </location>
</feature>
<feature type="modified residue" description="N6-acetyllysine" evidence="2">
    <location>
        <position position="132"/>
    </location>
</feature>
<feature type="modified residue" description="N6-acetyllysine" evidence="2">
    <location>
        <position position="139"/>
    </location>
</feature>
<feature type="modified residue" description="Phosphoserine" evidence="2">
    <location>
        <position position="161"/>
    </location>
</feature>
<feature type="modified residue" description="N6-acetyllysine" evidence="2">
    <location>
        <position position="200"/>
    </location>
</feature>
<feature type="modified residue" description="N6-acetyllysine" evidence="2">
    <location>
        <position position="218"/>
    </location>
</feature>
<feature type="modified residue" description="N6-acetyllysine" evidence="1">
    <location>
        <position position="227"/>
    </location>
</feature>
<feature type="modified residue" description="N6-acetyllysine" evidence="2">
    <location>
        <position position="271"/>
    </location>
</feature>
<feature type="modified residue" description="N6-succinyllysine" evidence="2">
    <location>
        <position position="338"/>
    </location>
</feature>
<feature type="modified residue" description="N6-acetyllysine" evidence="2">
    <location>
        <position position="347"/>
    </location>
</feature>
<feature type="modified residue" description="N6-acetyllysine" evidence="2">
    <location>
        <position position="386"/>
    </location>
</feature>
<feature type="modified residue" description="N6-acetyllysine" evidence="2">
    <location>
        <position position="423"/>
    </location>
</feature>
<dbReference type="EC" id="6.2.1.4" evidence="3"/>
<dbReference type="EMBL" id="BC104559">
    <property type="protein sequence ID" value="AAI04560.1"/>
    <property type="molecule type" value="mRNA"/>
</dbReference>
<dbReference type="RefSeq" id="NP_001029811.1">
    <property type="nucleotide sequence ID" value="NM_001034639.1"/>
</dbReference>
<dbReference type="SMR" id="Q3MHX5"/>
<dbReference type="FunCoup" id="Q3MHX5">
    <property type="interactions" value="1215"/>
</dbReference>
<dbReference type="STRING" id="9913.ENSBTAP00000012551"/>
<dbReference type="PaxDb" id="9913-ENSBTAP00000012551"/>
<dbReference type="PeptideAtlas" id="Q3MHX5"/>
<dbReference type="GeneID" id="537713"/>
<dbReference type="KEGG" id="bta:537713"/>
<dbReference type="CTD" id="8801"/>
<dbReference type="VEuPathDB" id="HostDB:ENSBTAG00000009541"/>
<dbReference type="eggNOG" id="KOG1447">
    <property type="taxonomic scope" value="Eukaryota"/>
</dbReference>
<dbReference type="HOGENOM" id="CLU_037430_0_1_1"/>
<dbReference type="InParanoid" id="Q3MHX5"/>
<dbReference type="OMA" id="KQMIGNR"/>
<dbReference type="OrthoDB" id="1552at2759"/>
<dbReference type="TreeFam" id="TF300624"/>
<dbReference type="Reactome" id="R-BTA-71403">
    <property type="pathway name" value="Citric acid cycle (TCA cycle)"/>
</dbReference>
<dbReference type="Reactome" id="R-BTA-9837999">
    <property type="pathway name" value="Mitochondrial protein degradation"/>
</dbReference>
<dbReference type="UniPathway" id="UPA00223">
    <property type="reaction ID" value="UER00999"/>
</dbReference>
<dbReference type="Proteomes" id="UP000009136">
    <property type="component" value="Chromosome 22"/>
</dbReference>
<dbReference type="Bgee" id="ENSBTAG00000009541">
    <property type="expression patterns" value="Expressed in abomasum and 104 other cell types or tissues"/>
</dbReference>
<dbReference type="GO" id="GO:0005739">
    <property type="term" value="C:mitochondrion"/>
    <property type="evidence" value="ECO:0000318"/>
    <property type="project" value="GO_Central"/>
</dbReference>
<dbReference type="GO" id="GO:0042709">
    <property type="term" value="C:succinate-CoA ligase complex"/>
    <property type="evidence" value="ECO:0000318"/>
    <property type="project" value="GO_Central"/>
</dbReference>
<dbReference type="GO" id="GO:0005524">
    <property type="term" value="F:ATP binding"/>
    <property type="evidence" value="ECO:0007669"/>
    <property type="project" value="InterPro"/>
</dbReference>
<dbReference type="GO" id="GO:0005525">
    <property type="term" value="F:GTP binding"/>
    <property type="evidence" value="ECO:0007669"/>
    <property type="project" value="UniProtKB-UniRule"/>
</dbReference>
<dbReference type="GO" id="GO:0000287">
    <property type="term" value="F:magnesium ion binding"/>
    <property type="evidence" value="ECO:0007669"/>
    <property type="project" value="UniProtKB-UniRule"/>
</dbReference>
<dbReference type="GO" id="GO:0004776">
    <property type="term" value="F:succinate-CoA ligase (GDP-forming) activity"/>
    <property type="evidence" value="ECO:0000318"/>
    <property type="project" value="GO_Central"/>
</dbReference>
<dbReference type="GO" id="GO:0006104">
    <property type="term" value="P:succinyl-CoA metabolic process"/>
    <property type="evidence" value="ECO:0000318"/>
    <property type="project" value="GO_Central"/>
</dbReference>
<dbReference type="GO" id="GO:0006099">
    <property type="term" value="P:tricarboxylic acid cycle"/>
    <property type="evidence" value="ECO:0000318"/>
    <property type="project" value="GO_Central"/>
</dbReference>
<dbReference type="FunFam" id="3.30.470.20:FF:000002">
    <property type="entry name" value="Succinate--CoA ligase [ADP-forming] subunit beta"/>
    <property type="match status" value="1"/>
</dbReference>
<dbReference type="FunFam" id="3.40.50.261:FF:000001">
    <property type="entry name" value="Succinate--CoA ligase [ADP-forming] subunit beta"/>
    <property type="match status" value="1"/>
</dbReference>
<dbReference type="FunFam" id="3.30.1490.20:FF:000004">
    <property type="entry name" value="Succinate--CoA ligase [ADP-forming] subunit beta, mitochondrial"/>
    <property type="match status" value="1"/>
</dbReference>
<dbReference type="Gene3D" id="3.30.1490.20">
    <property type="entry name" value="ATP-grasp fold, A domain"/>
    <property type="match status" value="1"/>
</dbReference>
<dbReference type="Gene3D" id="3.30.470.20">
    <property type="entry name" value="ATP-grasp fold, B domain"/>
    <property type="match status" value="1"/>
</dbReference>
<dbReference type="Gene3D" id="3.40.50.261">
    <property type="entry name" value="Succinyl-CoA synthetase domains"/>
    <property type="match status" value="1"/>
</dbReference>
<dbReference type="HAMAP" id="MF_00558">
    <property type="entry name" value="Succ_CoA_beta"/>
    <property type="match status" value="1"/>
</dbReference>
<dbReference type="HAMAP" id="MF_03221">
    <property type="entry name" value="Succ_CoA_betaG_euk"/>
    <property type="match status" value="1"/>
</dbReference>
<dbReference type="InterPro" id="IPR013650">
    <property type="entry name" value="ATP-grasp_succ-CoA_synth-type"/>
</dbReference>
<dbReference type="InterPro" id="IPR013815">
    <property type="entry name" value="ATP_grasp_subdomain_1"/>
</dbReference>
<dbReference type="InterPro" id="IPR017866">
    <property type="entry name" value="Succ-CoA_synthase_bsu_CS"/>
</dbReference>
<dbReference type="InterPro" id="IPR005811">
    <property type="entry name" value="SUCC_ACL_C"/>
</dbReference>
<dbReference type="InterPro" id="IPR034722">
    <property type="entry name" value="Succ_CoA_betaG_euk"/>
</dbReference>
<dbReference type="InterPro" id="IPR005809">
    <property type="entry name" value="Succ_CoA_ligase-like_bsu"/>
</dbReference>
<dbReference type="InterPro" id="IPR016102">
    <property type="entry name" value="Succinyl-CoA_synth-like"/>
</dbReference>
<dbReference type="NCBIfam" id="NF001913">
    <property type="entry name" value="PRK00696.1"/>
    <property type="match status" value="1"/>
</dbReference>
<dbReference type="NCBIfam" id="TIGR01016">
    <property type="entry name" value="sucCoAbeta"/>
    <property type="match status" value="1"/>
</dbReference>
<dbReference type="PANTHER" id="PTHR11815:SF10">
    <property type="entry name" value="SUCCINATE--COA LIGASE [GDP-FORMING] SUBUNIT BETA, MITOCHONDRIAL"/>
    <property type="match status" value="1"/>
</dbReference>
<dbReference type="PANTHER" id="PTHR11815">
    <property type="entry name" value="SUCCINYL-COA SYNTHETASE BETA CHAIN"/>
    <property type="match status" value="1"/>
</dbReference>
<dbReference type="Pfam" id="PF08442">
    <property type="entry name" value="ATP-grasp_2"/>
    <property type="match status" value="1"/>
</dbReference>
<dbReference type="Pfam" id="PF00549">
    <property type="entry name" value="Ligase_CoA"/>
    <property type="match status" value="1"/>
</dbReference>
<dbReference type="PIRSF" id="PIRSF001554">
    <property type="entry name" value="SucCS_beta"/>
    <property type="match status" value="1"/>
</dbReference>
<dbReference type="SUPFAM" id="SSF56059">
    <property type="entry name" value="Glutathione synthetase ATP-binding domain-like"/>
    <property type="match status" value="1"/>
</dbReference>
<dbReference type="SUPFAM" id="SSF52210">
    <property type="entry name" value="Succinyl-CoA synthetase domains"/>
    <property type="match status" value="1"/>
</dbReference>
<dbReference type="PROSITE" id="PS01217">
    <property type="entry name" value="SUCCINYL_COA_LIG_3"/>
    <property type="match status" value="1"/>
</dbReference>
<proteinExistence type="evidence at transcript level"/>
<organism>
    <name type="scientific">Bos taurus</name>
    <name type="common">Bovine</name>
    <dbReference type="NCBI Taxonomy" id="9913"/>
    <lineage>
        <taxon>Eukaryota</taxon>
        <taxon>Metazoa</taxon>
        <taxon>Chordata</taxon>
        <taxon>Craniata</taxon>
        <taxon>Vertebrata</taxon>
        <taxon>Euteleostomi</taxon>
        <taxon>Mammalia</taxon>
        <taxon>Eutheria</taxon>
        <taxon>Laurasiatheria</taxon>
        <taxon>Artiodactyla</taxon>
        <taxon>Ruminantia</taxon>
        <taxon>Pecora</taxon>
        <taxon>Bovidae</taxon>
        <taxon>Bovinae</taxon>
        <taxon>Bos</taxon>
    </lineage>
</organism>
<name>SUCB2_BOVIN</name>
<comment type="function">
    <text evidence="3">GTP-specific succinyl-CoA synthetase functions in the citric acid cycle (TCA), coupling the hydrolysis of succinyl-CoA to the synthesis of GTP and thus represents the only step of substrate-level phosphorylation in the TCA. The beta subunit provides nucleotide specificity of the enzyme and binds the substrate succinate, while the binding sites for coenzyme A and phosphate are found in the alpha subunit.</text>
</comment>
<comment type="catalytic activity">
    <reaction evidence="3">
        <text>GTP + succinate + CoA = succinyl-CoA + GDP + phosphate</text>
        <dbReference type="Rhea" id="RHEA:22120"/>
        <dbReference type="ChEBI" id="CHEBI:30031"/>
        <dbReference type="ChEBI" id="CHEBI:37565"/>
        <dbReference type="ChEBI" id="CHEBI:43474"/>
        <dbReference type="ChEBI" id="CHEBI:57287"/>
        <dbReference type="ChEBI" id="CHEBI:57292"/>
        <dbReference type="ChEBI" id="CHEBI:58189"/>
        <dbReference type="EC" id="6.2.1.4"/>
    </reaction>
</comment>
<comment type="cofactor">
    <cofactor evidence="3">
        <name>Mg(2+)</name>
        <dbReference type="ChEBI" id="CHEBI:18420"/>
    </cofactor>
    <text evidence="3">Binds 1 Mg(2+) ion per subunit.</text>
</comment>
<comment type="pathway">
    <text evidence="3">Carbohydrate metabolism; tricarboxylic acid cycle; succinate from succinyl-CoA (ligase route): step 1/1.</text>
</comment>
<comment type="subunit">
    <text evidence="3">Heterodimer of an alpha and a beta subunit. The beta subunit determines specificity for GTP.</text>
</comment>
<comment type="subcellular location">
    <subcellularLocation>
        <location evidence="3">Mitochondrion</location>
    </subcellularLocation>
</comment>
<comment type="similarity">
    <text evidence="3">Belongs to the succinate/malate CoA ligase beta subunit family. GTP-specific subunit beta subfamily.</text>
</comment>
<gene>
    <name evidence="3" type="primary">SUCLG2</name>
</gene>
<protein>
    <recommendedName>
        <fullName evidence="3">Succinate--CoA ligase [GDP-forming] subunit beta, mitochondrial</fullName>
        <ecNumber evidence="3">6.2.1.4</ecNumber>
    </recommendedName>
    <alternativeName>
        <fullName evidence="3">GTP-specific succinyl-CoA synthetase subunit beta</fullName>
        <shortName evidence="3">G-SCS</shortName>
        <shortName evidence="3">GTPSCS</shortName>
    </alternativeName>
    <alternativeName>
        <fullName evidence="3">Succinyl-CoA synthetase beta-G chain</fullName>
        <shortName evidence="3">SCS-betaG</shortName>
    </alternativeName>
</protein>
<reference key="1">
    <citation type="submission" date="2005-09" db="EMBL/GenBank/DDBJ databases">
        <authorList>
            <consortium name="NIH - Mammalian Gene Collection (MGC) project"/>
        </authorList>
    </citation>
    <scope>NUCLEOTIDE SEQUENCE [LARGE SCALE MRNA]</scope>
    <source>
        <strain>Crossbred X Angus</strain>
        <tissue>Ileum</tissue>
    </source>
</reference>